<organism>
    <name type="scientific">Drosophila melanogaster</name>
    <name type="common">Fruit fly</name>
    <dbReference type="NCBI Taxonomy" id="7227"/>
    <lineage>
        <taxon>Eukaryota</taxon>
        <taxon>Metazoa</taxon>
        <taxon>Ecdysozoa</taxon>
        <taxon>Arthropoda</taxon>
        <taxon>Hexapoda</taxon>
        <taxon>Insecta</taxon>
        <taxon>Pterygota</taxon>
        <taxon>Neoptera</taxon>
        <taxon>Endopterygota</taxon>
        <taxon>Diptera</taxon>
        <taxon>Brachycera</taxon>
        <taxon>Muscomorpha</taxon>
        <taxon>Ephydroidea</taxon>
        <taxon>Drosophilidae</taxon>
        <taxon>Drosophila</taxon>
        <taxon>Sophophora</taxon>
    </lineage>
</organism>
<evidence type="ECO:0000250" key="1"/>
<evidence type="ECO:0000255" key="2"/>
<evidence type="ECO:0000269" key="3">
    <source>
    </source>
</evidence>
<evidence type="ECO:0000269" key="4">
    <source>
    </source>
</evidence>
<evidence type="ECO:0000269" key="5">
    <source>
    </source>
</evidence>
<evidence type="ECO:0000305" key="6"/>
<comment type="function">
    <text evidence="1 4">Probable gustatory receptor which mediates acceptance or avoidance behavior, depending on its substrates (By similarity). Has also atypical sensory function in organ not limited to conventional taste sensing like abdominal ganglions.</text>
</comment>
<comment type="subcellular location">
    <subcellularLocation>
        <location evidence="1">Cell membrane</location>
        <topology evidence="1">Multi-pass membrane protein</topology>
    </subcellularLocation>
</comment>
<comment type="tissue specificity">
    <text evidence="3 4 5">Expressed in the adult labellar chemosensory neurons and in abdominal ganglions. In larvae, is expressed in neurons of the dorsal and posterior pharyngeal sense organs.</text>
</comment>
<comment type="similarity">
    <text evidence="6">Belongs to the insect chemoreceptor superfamily. Gustatory receptor (GR) family. Gr2a subfamily.</text>
</comment>
<name>GR39B_DROME</name>
<sequence length="369" mass="42334">MLYSFHPYLKYFALLGLVPWSESCAQSKFVQKVYSAILIILNAVHFGISIYFPQSAELFLSLMVNVIVFVARIVCVTVIILQVMVHYDDYFRFCREMKYLGLRLQCELKIHVGRLKWQSYAKILALGIGFLVTVLPSIYVALSGSLLYFWSSLLSILIIRMQFVLVLLNVELLGHHVSLLGIRLQNVLECHLMGANCTLDGNANRLCSLEFLLALKQSHMQLHYLFTHFNDLFGWSILGTYVVLFSDSTVNIYWTQQVLVEVYEYKYLYATFSVFVPSFFNILVFCRCGEFCQRQSVLIGSYLRNLSCHPSIGRETSYKDLLMEFILQVEQNVLAINAEGFMSTDNSLLMSILAAKVTYLIVLMQFSSV</sequence>
<accession>P58960</accession>
<gene>
    <name type="primary">Gr39b</name>
    <name type="synonym">GR39D.1</name>
    <name type="ORF">CG31620</name>
</gene>
<dbReference type="EMBL" id="AE014134">
    <property type="protein sequence ID" value="AAN11120.1"/>
    <property type="molecule type" value="Genomic_DNA"/>
</dbReference>
<dbReference type="RefSeq" id="NP_724336.1">
    <property type="nucleotide sequence ID" value="NM_165376.1"/>
</dbReference>
<dbReference type="SMR" id="P58960"/>
<dbReference type="FunCoup" id="P58960">
    <property type="interactions" value="19"/>
</dbReference>
<dbReference type="STRING" id="7227.FBpp0081050"/>
<dbReference type="PaxDb" id="7227-FBpp0081050"/>
<dbReference type="EnsemblMetazoa" id="FBtr0081522">
    <property type="protein sequence ID" value="FBpp0081050"/>
    <property type="gene ID" value="FBgn0041245"/>
</dbReference>
<dbReference type="GeneID" id="117347"/>
<dbReference type="KEGG" id="dme:Dmel_CG31620"/>
<dbReference type="AGR" id="FB:FBgn0041245"/>
<dbReference type="CTD" id="117347"/>
<dbReference type="FlyBase" id="FBgn0041245">
    <property type="gene designation" value="Gr39b"/>
</dbReference>
<dbReference type="VEuPathDB" id="VectorBase:FBgn0041245"/>
<dbReference type="eggNOG" id="ENOG502T3DC">
    <property type="taxonomic scope" value="Eukaryota"/>
</dbReference>
<dbReference type="HOGENOM" id="CLU_062916_0_0_1"/>
<dbReference type="InParanoid" id="P58960"/>
<dbReference type="OMA" id="GWSILSI"/>
<dbReference type="OrthoDB" id="6366728at2759"/>
<dbReference type="PhylomeDB" id="P58960"/>
<dbReference type="BioGRID-ORCS" id="117347">
    <property type="hits" value="0 hits in 1 CRISPR screen"/>
</dbReference>
<dbReference type="GenomeRNAi" id="117347"/>
<dbReference type="PRO" id="PR:P58960"/>
<dbReference type="Proteomes" id="UP000000803">
    <property type="component" value="Chromosome 2L"/>
</dbReference>
<dbReference type="GO" id="GO:0030424">
    <property type="term" value="C:axon"/>
    <property type="evidence" value="ECO:0000318"/>
    <property type="project" value="GO_Central"/>
</dbReference>
<dbReference type="GO" id="GO:0030425">
    <property type="term" value="C:dendrite"/>
    <property type="evidence" value="ECO:0000318"/>
    <property type="project" value="GO_Central"/>
</dbReference>
<dbReference type="GO" id="GO:0016020">
    <property type="term" value="C:membrane"/>
    <property type="evidence" value="ECO:0000303"/>
    <property type="project" value="UniProtKB"/>
</dbReference>
<dbReference type="GO" id="GO:0043025">
    <property type="term" value="C:neuronal cell body"/>
    <property type="evidence" value="ECO:0000318"/>
    <property type="project" value="GO_Central"/>
</dbReference>
<dbReference type="GO" id="GO:0005886">
    <property type="term" value="C:plasma membrane"/>
    <property type="evidence" value="ECO:0000250"/>
    <property type="project" value="FlyBase"/>
</dbReference>
<dbReference type="GO" id="GO:0015276">
    <property type="term" value="F:ligand-gated monoatomic ion channel activity"/>
    <property type="evidence" value="ECO:0000250"/>
    <property type="project" value="FlyBase"/>
</dbReference>
<dbReference type="GO" id="GO:0008527">
    <property type="term" value="F:taste receptor activity"/>
    <property type="evidence" value="ECO:0000250"/>
    <property type="project" value="FlyBase"/>
</dbReference>
<dbReference type="GO" id="GO:0007635">
    <property type="term" value="P:chemosensory behavior"/>
    <property type="evidence" value="ECO:0000318"/>
    <property type="project" value="GO_Central"/>
</dbReference>
<dbReference type="GO" id="GO:0008049">
    <property type="term" value="P:male courtship behavior"/>
    <property type="evidence" value="ECO:0000318"/>
    <property type="project" value="GO_Central"/>
</dbReference>
<dbReference type="GO" id="GO:0034220">
    <property type="term" value="P:monoatomic ion transmembrane transport"/>
    <property type="evidence" value="ECO:0000250"/>
    <property type="project" value="FlyBase"/>
</dbReference>
<dbReference type="GO" id="GO:0050909">
    <property type="term" value="P:sensory perception of taste"/>
    <property type="evidence" value="ECO:0000250"/>
    <property type="project" value="FlyBase"/>
</dbReference>
<dbReference type="GO" id="GO:0007165">
    <property type="term" value="P:signal transduction"/>
    <property type="evidence" value="ECO:0007669"/>
    <property type="project" value="UniProtKB-KW"/>
</dbReference>
<dbReference type="InterPro" id="IPR013604">
    <property type="entry name" value="7TM_chemorcpt"/>
</dbReference>
<dbReference type="PANTHER" id="PTHR21143:SF133">
    <property type="entry name" value="GUSTATORY AND PHEROMONE RECEPTOR 32A-RELATED"/>
    <property type="match status" value="1"/>
</dbReference>
<dbReference type="PANTHER" id="PTHR21143">
    <property type="entry name" value="INVERTEBRATE GUSTATORY RECEPTOR"/>
    <property type="match status" value="1"/>
</dbReference>
<dbReference type="Pfam" id="PF08395">
    <property type="entry name" value="7tm_7"/>
    <property type="match status" value="1"/>
</dbReference>
<proteinExistence type="evidence at transcript level"/>
<keyword id="KW-1003">Cell membrane</keyword>
<keyword id="KW-0472">Membrane</keyword>
<keyword id="KW-0675">Receptor</keyword>
<keyword id="KW-1185">Reference proteome</keyword>
<keyword id="KW-0807">Transducer</keyword>
<keyword id="KW-0812">Transmembrane</keyword>
<keyword id="KW-1133">Transmembrane helix</keyword>
<feature type="chain" id="PRO_0000216513" description="Putative gustatory receptor 39b">
    <location>
        <begin position="1"/>
        <end position="369"/>
    </location>
</feature>
<feature type="topological domain" description="Cytoplasmic" evidence="1">
    <location>
        <begin position="1"/>
        <end position="32"/>
    </location>
</feature>
<feature type="transmembrane region" description="Helical; Name=1" evidence="2">
    <location>
        <begin position="33"/>
        <end position="53"/>
    </location>
</feature>
<feature type="topological domain" description="Extracellular" evidence="1">
    <location>
        <begin position="54"/>
        <end position="59"/>
    </location>
</feature>
<feature type="transmembrane region" description="Helical; Name=2" evidence="2">
    <location>
        <begin position="60"/>
        <end position="80"/>
    </location>
</feature>
<feature type="topological domain" description="Cytoplasmic" evidence="1">
    <location>
        <begin position="81"/>
        <end position="122"/>
    </location>
</feature>
<feature type="transmembrane region" description="Helical; Name=3" evidence="2">
    <location>
        <begin position="123"/>
        <end position="143"/>
    </location>
</feature>
<feature type="topological domain" description="Extracellular" evidence="1">
    <location>
        <begin position="144"/>
        <end position="147"/>
    </location>
</feature>
<feature type="transmembrane region" description="Helical; Name=4" evidence="2">
    <location>
        <begin position="148"/>
        <end position="168"/>
    </location>
</feature>
<feature type="topological domain" description="Cytoplasmic" evidence="1">
    <location>
        <begin position="169"/>
        <end position="224"/>
    </location>
</feature>
<feature type="transmembrane region" description="Helical; Name=5" evidence="2">
    <location>
        <begin position="225"/>
        <end position="245"/>
    </location>
</feature>
<feature type="topological domain" description="Extracellular" evidence="1">
    <location>
        <begin position="246"/>
        <end position="265"/>
    </location>
</feature>
<feature type="transmembrane region" description="Helical; Name=6" evidence="2">
    <location>
        <begin position="266"/>
        <end position="286"/>
    </location>
</feature>
<feature type="topological domain" description="Cytoplasmic" evidence="1">
    <location>
        <begin position="287"/>
        <end position="348"/>
    </location>
</feature>
<feature type="transmembrane region" description="Helical; Name=7" evidence="2">
    <location>
        <begin position="349"/>
        <end position="368"/>
    </location>
</feature>
<feature type="topological domain" description="Extracellular" evidence="1">
    <location>
        <position position="369"/>
    </location>
</feature>
<protein>
    <recommendedName>
        <fullName>Putative gustatory receptor 39b</fullName>
    </recommendedName>
</protein>
<reference key="1">
    <citation type="journal article" date="2000" name="Science">
        <title>The genome sequence of Drosophila melanogaster.</title>
        <authorList>
            <person name="Adams M.D."/>
            <person name="Celniker S.E."/>
            <person name="Holt R.A."/>
            <person name="Evans C.A."/>
            <person name="Gocayne J.D."/>
            <person name="Amanatides P.G."/>
            <person name="Scherer S.E."/>
            <person name="Li P.W."/>
            <person name="Hoskins R.A."/>
            <person name="Galle R.F."/>
            <person name="George R.A."/>
            <person name="Lewis S.E."/>
            <person name="Richards S."/>
            <person name="Ashburner M."/>
            <person name="Henderson S.N."/>
            <person name="Sutton G.G."/>
            <person name="Wortman J.R."/>
            <person name="Yandell M.D."/>
            <person name="Zhang Q."/>
            <person name="Chen L.X."/>
            <person name="Brandon R.C."/>
            <person name="Rogers Y.-H.C."/>
            <person name="Blazej R.G."/>
            <person name="Champe M."/>
            <person name="Pfeiffer B.D."/>
            <person name="Wan K.H."/>
            <person name="Doyle C."/>
            <person name="Baxter E.G."/>
            <person name="Helt G."/>
            <person name="Nelson C.R."/>
            <person name="Miklos G.L.G."/>
            <person name="Abril J.F."/>
            <person name="Agbayani A."/>
            <person name="An H.-J."/>
            <person name="Andrews-Pfannkoch C."/>
            <person name="Baldwin D."/>
            <person name="Ballew R.M."/>
            <person name="Basu A."/>
            <person name="Baxendale J."/>
            <person name="Bayraktaroglu L."/>
            <person name="Beasley E.M."/>
            <person name="Beeson K.Y."/>
            <person name="Benos P.V."/>
            <person name="Berman B.P."/>
            <person name="Bhandari D."/>
            <person name="Bolshakov S."/>
            <person name="Borkova D."/>
            <person name="Botchan M.R."/>
            <person name="Bouck J."/>
            <person name="Brokstein P."/>
            <person name="Brottier P."/>
            <person name="Burtis K.C."/>
            <person name="Busam D.A."/>
            <person name="Butler H."/>
            <person name="Cadieu E."/>
            <person name="Center A."/>
            <person name="Chandra I."/>
            <person name="Cherry J.M."/>
            <person name="Cawley S."/>
            <person name="Dahlke C."/>
            <person name="Davenport L.B."/>
            <person name="Davies P."/>
            <person name="de Pablos B."/>
            <person name="Delcher A."/>
            <person name="Deng Z."/>
            <person name="Mays A.D."/>
            <person name="Dew I."/>
            <person name="Dietz S.M."/>
            <person name="Dodson K."/>
            <person name="Doup L.E."/>
            <person name="Downes M."/>
            <person name="Dugan-Rocha S."/>
            <person name="Dunkov B.C."/>
            <person name="Dunn P."/>
            <person name="Durbin K.J."/>
            <person name="Evangelista C.C."/>
            <person name="Ferraz C."/>
            <person name="Ferriera S."/>
            <person name="Fleischmann W."/>
            <person name="Fosler C."/>
            <person name="Gabrielian A.E."/>
            <person name="Garg N.S."/>
            <person name="Gelbart W.M."/>
            <person name="Glasser K."/>
            <person name="Glodek A."/>
            <person name="Gong F."/>
            <person name="Gorrell J.H."/>
            <person name="Gu Z."/>
            <person name="Guan P."/>
            <person name="Harris M."/>
            <person name="Harris N.L."/>
            <person name="Harvey D.A."/>
            <person name="Heiman T.J."/>
            <person name="Hernandez J.R."/>
            <person name="Houck J."/>
            <person name="Hostin D."/>
            <person name="Houston K.A."/>
            <person name="Howland T.J."/>
            <person name="Wei M.-H."/>
            <person name="Ibegwam C."/>
            <person name="Jalali M."/>
            <person name="Kalush F."/>
            <person name="Karpen G.H."/>
            <person name="Ke Z."/>
            <person name="Kennison J.A."/>
            <person name="Ketchum K.A."/>
            <person name="Kimmel B.E."/>
            <person name="Kodira C.D."/>
            <person name="Kraft C.L."/>
            <person name="Kravitz S."/>
            <person name="Kulp D."/>
            <person name="Lai Z."/>
            <person name="Lasko P."/>
            <person name="Lei Y."/>
            <person name="Levitsky A.A."/>
            <person name="Li J.H."/>
            <person name="Li Z."/>
            <person name="Liang Y."/>
            <person name="Lin X."/>
            <person name="Liu X."/>
            <person name="Mattei B."/>
            <person name="McIntosh T.C."/>
            <person name="McLeod M.P."/>
            <person name="McPherson D."/>
            <person name="Merkulov G."/>
            <person name="Milshina N.V."/>
            <person name="Mobarry C."/>
            <person name="Morris J."/>
            <person name="Moshrefi A."/>
            <person name="Mount S.M."/>
            <person name="Moy M."/>
            <person name="Murphy B."/>
            <person name="Murphy L."/>
            <person name="Muzny D.M."/>
            <person name="Nelson D.L."/>
            <person name="Nelson D.R."/>
            <person name="Nelson K.A."/>
            <person name="Nixon K."/>
            <person name="Nusskern D.R."/>
            <person name="Pacleb J.M."/>
            <person name="Palazzolo M."/>
            <person name="Pittman G.S."/>
            <person name="Pan S."/>
            <person name="Pollard J."/>
            <person name="Puri V."/>
            <person name="Reese M.G."/>
            <person name="Reinert K."/>
            <person name="Remington K."/>
            <person name="Saunders R.D.C."/>
            <person name="Scheeler F."/>
            <person name="Shen H."/>
            <person name="Shue B.C."/>
            <person name="Siden-Kiamos I."/>
            <person name="Simpson M."/>
            <person name="Skupski M.P."/>
            <person name="Smith T.J."/>
            <person name="Spier E."/>
            <person name="Spradling A.C."/>
            <person name="Stapleton M."/>
            <person name="Strong R."/>
            <person name="Sun E."/>
            <person name="Svirskas R."/>
            <person name="Tector C."/>
            <person name="Turner R."/>
            <person name="Venter E."/>
            <person name="Wang A.H."/>
            <person name="Wang X."/>
            <person name="Wang Z.-Y."/>
            <person name="Wassarman D.A."/>
            <person name="Weinstock G.M."/>
            <person name="Weissenbach J."/>
            <person name="Williams S.M."/>
            <person name="Woodage T."/>
            <person name="Worley K.C."/>
            <person name="Wu D."/>
            <person name="Yang S."/>
            <person name="Yao Q.A."/>
            <person name="Ye J."/>
            <person name="Yeh R.-F."/>
            <person name="Zaveri J.S."/>
            <person name="Zhan M."/>
            <person name="Zhang G."/>
            <person name="Zhao Q."/>
            <person name="Zheng L."/>
            <person name="Zheng X.H."/>
            <person name="Zhong F.N."/>
            <person name="Zhong W."/>
            <person name="Zhou X."/>
            <person name="Zhu S.C."/>
            <person name="Zhu X."/>
            <person name="Smith H.O."/>
            <person name="Gibbs R.A."/>
            <person name="Myers E.W."/>
            <person name="Rubin G.M."/>
            <person name="Venter J.C."/>
        </authorList>
    </citation>
    <scope>NUCLEOTIDE SEQUENCE [LARGE SCALE GENOMIC DNA]</scope>
    <source>
        <strain>Berkeley</strain>
    </source>
</reference>
<reference key="2">
    <citation type="journal article" date="2002" name="Genome Biol.">
        <title>Annotation of the Drosophila melanogaster euchromatic genome: a systematic review.</title>
        <authorList>
            <person name="Misra S."/>
            <person name="Crosby M.A."/>
            <person name="Mungall C.J."/>
            <person name="Matthews B.B."/>
            <person name="Campbell K.S."/>
            <person name="Hradecky P."/>
            <person name="Huang Y."/>
            <person name="Kaminker J.S."/>
            <person name="Millburn G.H."/>
            <person name="Prochnik S.E."/>
            <person name="Smith C.D."/>
            <person name="Tupy J.L."/>
            <person name="Whitfield E.J."/>
            <person name="Bayraktaroglu L."/>
            <person name="Berman B.P."/>
            <person name="Bettencourt B.R."/>
            <person name="Celniker S.E."/>
            <person name="de Grey A.D.N.J."/>
            <person name="Drysdale R.A."/>
            <person name="Harris N.L."/>
            <person name="Richter J."/>
            <person name="Russo S."/>
            <person name="Schroeder A.J."/>
            <person name="Shu S.Q."/>
            <person name="Stapleton M."/>
            <person name="Yamada C."/>
            <person name="Ashburner M."/>
            <person name="Gelbart W.M."/>
            <person name="Rubin G.M."/>
            <person name="Lewis S.E."/>
        </authorList>
    </citation>
    <scope>GENOME REANNOTATION</scope>
    <source>
        <strain>Berkeley</strain>
    </source>
</reference>
<reference key="3">
    <citation type="journal article" date="2000" name="Science">
        <title>Candidate taste receptors in Drosophila.</title>
        <authorList>
            <person name="Clyne P.J."/>
            <person name="Warr C.G."/>
            <person name="Carlson J.R."/>
        </authorList>
    </citation>
    <scope>IDENTIFICATION</scope>
    <scope>TISSUE SPECIFICITY</scope>
</reference>
<reference key="4">
    <citation type="journal article" date="2001" name="Curr. Biol.">
        <title>Spatially restricted expression of candidate taste receptors in the Drosophila gustatory system.</title>
        <authorList>
            <person name="Dunipace L."/>
            <person name="Meister S."/>
            <person name="McNealy C."/>
            <person name="Amrein H."/>
        </authorList>
    </citation>
    <scope>IDENTIFICATION</scope>
</reference>
<reference key="5">
    <citation type="journal article" date="2011" name="Mol. Cells">
        <title>A systematic analysis of Drosophila gustatory receptor gene expression in abdominal neurons which project to the central nervous system.</title>
        <authorList>
            <person name="Park J.H."/>
            <person name="Kwon J.Y."/>
        </authorList>
    </citation>
    <scope>TISSUE SPECIFICITY</scope>
    <scope>FUNCTION</scope>
</reference>
<reference key="6">
    <citation type="journal article" date="2011" name="J. Neurosci.">
        <title>Molecular and cellular organization of the taste system in the Drosophila larva.</title>
        <authorList>
            <person name="Kwon J.Y."/>
            <person name="Dahanukar A."/>
            <person name="Weiss L.A."/>
            <person name="Carlson J.R."/>
        </authorList>
    </citation>
    <scope>TISSUE SPECIFICITY</scope>
</reference>